<dbReference type="EMBL" id="CP001138">
    <property type="protein sequence ID" value="ACH52952.1"/>
    <property type="molecule type" value="Genomic_DNA"/>
</dbReference>
<dbReference type="SMR" id="B5F095"/>
<dbReference type="KEGG" id="sea:SeAg_B0853"/>
<dbReference type="HOGENOM" id="CLU_018816_6_3_6"/>
<dbReference type="Proteomes" id="UP000008819">
    <property type="component" value="Chromosome"/>
</dbReference>
<dbReference type="GO" id="GO:0042597">
    <property type="term" value="C:periplasmic space"/>
    <property type="evidence" value="ECO:0007669"/>
    <property type="project" value="UniProtKB-SubCell"/>
</dbReference>
<dbReference type="FunFam" id="1.10.287.470:FF:000004">
    <property type="entry name" value="UPF0194 membrane protein YbhG"/>
    <property type="match status" value="1"/>
</dbReference>
<dbReference type="FunFam" id="2.40.50.100:FF:000025">
    <property type="entry name" value="UPF0194 membrane protein YbhG"/>
    <property type="match status" value="1"/>
</dbReference>
<dbReference type="Gene3D" id="2.40.30.170">
    <property type="match status" value="1"/>
</dbReference>
<dbReference type="Gene3D" id="2.40.50.100">
    <property type="match status" value="2"/>
</dbReference>
<dbReference type="Gene3D" id="1.10.287.470">
    <property type="entry name" value="Helix hairpin bin"/>
    <property type="match status" value="1"/>
</dbReference>
<dbReference type="HAMAP" id="MF_01304">
    <property type="entry name" value="UPF0194"/>
    <property type="match status" value="1"/>
</dbReference>
<dbReference type="InterPro" id="IPR032317">
    <property type="entry name" value="CusB_D23"/>
</dbReference>
<dbReference type="InterPro" id="IPR022936">
    <property type="entry name" value="UPF0194_membrane_YbhG"/>
</dbReference>
<dbReference type="InterPro" id="IPR050465">
    <property type="entry name" value="UPF0194_transport"/>
</dbReference>
<dbReference type="NCBIfam" id="NF002939">
    <property type="entry name" value="PRK03598.1"/>
    <property type="match status" value="1"/>
</dbReference>
<dbReference type="PANTHER" id="PTHR32347">
    <property type="entry name" value="EFFLUX SYSTEM COMPONENT YKNX-RELATED"/>
    <property type="match status" value="1"/>
</dbReference>
<dbReference type="PANTHER" id="PTHR32347:SF29">
    <property type="entry name" value="UPF0194 MEMBRANE PROTEIN YBHG"/>
    <property type="match status" value="1"/>
</dbReference>
<dbReference type="Pfam" id="PF16576">
    <property type="entry name" value="HlyD_D23"/>
    <property type="match status" value="1"/>
</dbReference>
<dbReference type="SUPFAM" id="SSF111369">
    <property type="entry name" value="HlyD-like secretion proteins"/>
    <property type="match status" value="3"/>
</dbReference>
<reference key="1">
    <citation type="journal article" date="2011" name="J. Bacteriol.">
        <title>Comparative genomics of 28 Salmonella enterica isolates: evidence for CRISPR-mediated adaptive sublineage evolution.</title>
        <authorList>
            <person name="Fricke W.F."/>
            <person name="Mammel M.K."/>
            <person name="McDermott P.F."/>
            <person name="Tartera C."/>
            <person name="White D.G."/>
            <person name="Leclerc J.E."/>
            <person name="Ravel J."/>
            <person name="Cebula T.A."/>
        </authorList>
    </citation>
    <scope>NUCLEOTIDE SEQUENCE [LARGE SCALE GENOMIC DNA]</scope>
    <source>
        <strain>SL483</strain>
    </source>
</reference>
<proteinExistence type="inferred from homology"/>
<feature type="signal peptide" evidence="1">
    <location>
        <begin position="1"/>
        <end position="19"/>
    </location>
</feature>
<feature type="chain" id="PRO_1000140657" description="UPF0194 membrane protein YbhG">
    <location>
        <begin position="20"/>
        <end position="331"/>
    </location>
</feature>
<feature type="coiled-coil region" evidence="1">
    <location>
        <begin position="107"/>
        <end position="208"/>
    </location>
</feature>
<accession>B5F095</accession>
<protein>
    <recommendedName>
        <fullName evidence="1">UPF0194 membrane protein YbhG</fullName>
    </recommendedName>
</protein>
<comment type="subcellular location">
    <subcellularLocation>
        <location evidence="1">Periplasm</location>
    </subcellularLocation>
</comment>
<comment type="similarity">
    <text evidence="1">Belongs to the UPF0194 family.</text>
</comment>
<sequence length="331" mass="36311">MKKPVVIGLAIAAIVAVIAGGTWWYQSRQDDGLTLYGNVDIRTVNISFRVGGRLASLNVDEGDTIKAGQVLGELDHAPYENALMQAKAGVSVAQAQYDLMLAGYRDEEIAQAAAAVRQAQAAYDYAQNFYNRQQGLWKSRTISANDLENARSSRDQAQATLKSAQDKLSQYRTGNREQDIAQAKASLEQAKAQLAQAQLDLQDTTLIAPANGTLLTRAVEPGSMLNAGSTVLTLSLTRPVWVRAYVDERNLSQTQPGRDILLYTDGRPDKPYHGKIGFVSPTAEFTPKTVETPDLRTDLVYRLRIIVTDADDALRQGMPVTVKFNDEARHE</sequence>
<keyword id="KW-0175">Coiled coil</keyword>
<keyword id="KW-0574">Periplasm</keyword>
<keyword id="KW-0732">Signal</keyword>
<name>YBHG_SALA4</name>
<evidence type="ECO:0000255" key="1">
    <source>
        <dbReference type="HAMAP-Rule" id="MF_01304"/>
    </source>
</evidence>
<gene>
    <name evidence="1" type="primary">ybhG</name>
    <name type="ordered locus">SeAg_B0853</name>
</gene>
<organism>
    <name type="scientific">Salmonella agona (strain SL483)</name>
    <dbReference type="NCBI Taxonomy" id="454166"/>
    <lineage>
        <taxon>Bacteria</taxon>
        <taxon>Pseudomonadati</taxon>
        <taxon>Pseudomonadota</taxon>
        <taxon>Gammaproteobacteria</taxon>
        <taxon>Enterobacterales</taxon>
        <taxon>Enterobacteriaceae</taxon>
        <taxon>Salmonella</taxon>
    </lineage>
</organism>